<protein>
    <recommendedName>
        <fullName evidence="1">Transcription antitermination protein NusB</fullName>
    </recommendedName>
    <alternativeName>
        <fullName evidence="1">Antitermination factor NusB</fullName>
    </alternativeName>
</protein>
<name>NUSB_STRP6</name>
<reference key="1">
    <citation type="journal article" date="2004" name="J. Infect. Dis.">
        <title>Progress toward characterization of the group A Streptococcus metagenome: complete genome sequence of a macrolide-resistant serotype M6 strain.</title>
        <authorList>
            <person name="Banks D.J."/>
            <person name="Porcella S.F."/>
            <person name="Barbian K.D."/>
            <person name="Beres S.B."/>
            <person name="Philips L.E."/>
            <person name="Voyich J.M."/>
            <person name="DeLeo F.R."/>
            <person name="Martin J.M."/>
            <person name="Somerville G.A."/>
            <person name="Musser J.M."/>
        </authorList>
    </citation>
    <scope>NUCLEOTIDE SEQUENCE [LARGE SCALE GENOMIC DNA]</scope>
    <source>
        <strain>ATCC BAA-946 / MGAS10394</strain>
    </source>
</reference>
<comment type="function">
    <text evidence="1">Involved in transcription antitermination. Required for transcription of ribosomal RNA (rRNA) genes. Binds specifically to the boxA antiterminator sequence of the ribosomal RNA (rrn) operons.</text>
</comment>
<comment type="similarity">
    <text evidence="1">Belongs to the NusB family.</text>
</comment>
<comment type="sequence caution" evidence="2">
    <conflict type="erroneous initiation">
        <sequence resource="EMBL-CDS" id="AAT87669"/>
    </conflict>
</comment>
<accession>Q5XA94</accession>
<gene>
    <name evidence="1" type="primary">nusB</name>
    <name type="ordered locus">M6_Spy1534</name>
</gene>
<evidence type="ECO:0000255" key="1">
    <source>
        <dbReference type="HAMAP-Rule" id="MF_00073"/>
    </source>
</evidence>
<evidence type="ECO:0000305" key="2"/>
<dbReference type="EMBL" id="CP000003">
    <property type="protein sequence ID" value="AAT87669.1"/>
    <property type="status" value="ALT_INIT"/>
    <property type="molecule type" value="Genomic_DNA"/>
</dbReference>
<dbReference type="RefSeq" id="WP_002983167.1">
    <property type="nucleotide sequence ID" value="NC_006086.1"/>
</dbReference>
<dbReference type="SMR" id="Q5XA94"/>
<dbReference type="KEGG" id="spa:M6_Spy1534"/>
<dbReference type="HOGENOM" id="CLU_087843_3_2_9"/>
<dbReference type="Proteomes" id="UP000001167">
    <property type="component" value="Chromosome"/>
</dbReference>
<dbReference type="GO" id="GO:0005829">
    <property type="term" value="C:cytosol"/>
    <property type="evidence" value="ECO:0007669"/>
    <property type="project" value="TreeGrafter"/>
</dbReference>
<dbReference type="GO" id="GO:0003723">
    <property type="term" value="F:RNA binding"/>
    <property type="evidence" value="ECO:0007669"/>
    <property type="project" value="UniProtKB-UniRule"/>
</dbReference>
<dbReference type="GO" id="GO:0006353">
    <property type="term" value="P:DNA-templated transcription termination"/>
    <property type="evidence" value="ECO:0007669"/>
    <property type="project" value="UniProtKB-UniRule"/>
</dbReference>
<dbReference type="GO" id="GO:0031564">
    <property type="term" value="P:transcription antitermination"/>
    <property type="evidence" value="ECO:0007669"/>
    <property type="project" value="UniProtKB-KW"/>
</dbReference>
<dbReference type="Gene3D" id="1.10.940.10">
    <property type="entry name" value="NusB-like"/>
    <property type="match status" value="1"/>
</dbReference>
<dbReference type="HAMAP" id="MF_00073">
    <property type="entry name" value="NusB"/>
    <property type="match status" value="1"/>
</dbReference>
<dbReference type="InterPro" id="IPR035926">
    <property type="entry name" value="NusB-like_sf"/>
</dbReference>
<dbReference type="InterPro" id="IPR011605">
    <property type="entry name" value="NusB_fam"/>
</dbReference>
<dbReference type="InterPro" id="IPR006027">
    <property type="entry name" value="NusB_RsmB_TIM44"/>
</dbReference>
<dbReference type="NCBIfam" id="TIGR01951">
    <property type="entry name" value="nusB"/>
    <property type="match status" value="1"/>
</dbReference>
<dbReference type="NCBIfam" id="NF001223">
    <property type="entry name" value="PRK00202.1-1"/>
    <property type="match status" value="1"/>
</dbReference>
<dbReference type="PANTHER" id="PTHR11078:SF3">
    <property type="entry name" value="ANTITERMINATION NUSB DOMAIN-CONTAINING PROTEIN"/>
    <property type="match status" value="1"/>
</dbReference>
<dbReference type="PANTHER" id="PTHR11078">
    <property type="entry name" value="N UTILIZATION SUBSTANCE PROTEIN B-RELATED"/>
    <property type="match status" value="1"/>
</dbReference>
<dbReference type="Pfam" id="PF01029">
    <property type="entry name" value="NusB"/>
    <property type="match status" value="1"/>
</dbReference>
<dbReference type="SUPFAM" id="SSF48013">
    <property type="entry name" value="NusB-like"/>
    <property type="match status" value="1"/>
</dbReference>
<keyword id="KW-0694">RNA-binding</keyword>
<keyword id="KW-0804">Transcription</keyword>
<keyword id="KW-0889">Transcription antitermination</keyword>
<keyword id="KW-0805">Transcription regulation</keyword>
<organism>
    <name type="scientific">Streptococcus pyogenes serotype M6 (strain ATCC BAA-946 / MGAS10394)</name>
    <dbReference type="NCBI Taxonomy" id="286636"/>
    <lineage>
        <taxon>Bacteria</taxon>
        <taxon>Bacillati</taxon>
        <taxon>Bacillota</taxon>
        <taxon>Bacilli</taxon>
        <taxon>Lactobacillales</taxon>
        <taxon>Streptococcaceae</taxon>
        <taxon>Streptococcus</taxon>
    </lineage>
</organism>
<proteinExistence type="inferred from homology"/>
<sequence length="150" mass="16949">MTNSFQNSRRDLRERAFQALFNIETGAELLAASQFAYGYDKVTGEDAQVLELPIFLLSLVTGVNNHKEELDNLISTHLKKGWSLERLTLTDKTLLRLGLFEIKYFDETPDRVALNEIIEVAKKYSDETSAKFINGLLSQYVSEAPSANKS</sequence>
<feature type="chain" id="PRO_0000176594" description="Transcription antitermination protein NusB">
    <location>
        <begin position="1"/>
        <end position="150"/>
    </location>
</feature>